<organism>
    <name type="scientific">Salmonella agona (strain SL483)</name>
    <dbReference type="NCBI Taxonomy" id="454166"/>
    <lineage>
        <taxon>Bacteria</taxon>
        <taxon>Pseudomonadati</taxon>
        <taxon>Pseudomonadota</taxon>
        <taxon>Gammaproteobacteria</taxon>
        <taxon>Enterobacterales</taxon>
        <taxon>Enterobacteriaceae</taxon>
        <taxon>Salmonella</taxon>
    </lineage>
</organism>
<reference key="1">
    <citation type="journal article" date="2011" name="J. Bacteriol.">
        <title>Comparative genomics of 28 Salmonella enterica isolates: evidence for CRISPR-mediated adaptive sublineage evolution.</title>
        <authorList>
            <person name="Fricke W.F."/>
            <person name="Mammel M.K."/>
            <person name="McDermott P.F."/>
            <person name="Tartera C."/>
            <person name="White D.G."/>
            <person name="Leclerc J.E."/>
            <person name="Ravel J."/>
            <person name="Cebula T.A."/>
        </authorList>
    </citation>
    <scope>NUCLEOTIDE SEQUENCE [LARGE SCALE GENOMIC DNA]</scope>
    <source>
        <strain>SL483</strain>
    </source>
</reference>
<gene>
    <name evidence="1" type="primary">rpsT</name>
    <name type="ordered locus">SeAg_B0048</name>
</gene>
<dbReference type="EMBL" id="CP001138">
    <property type="protein sequence ID" value="ACH48924.1"/>
    <property type="molecule type" value="Genomic_DNA"/>
</dbReference>
<dbReference type="RefSeq" id="WP_001518655.1">
    <property type="nucleotide sequence ID" value="NC_011149.1"/>
</dbReference>
<dbReference type="SMR" id="B5F721"/>
<dbReference type="GeneID" id="93310349"/>
<dbReference type="KEGG" id="sea:SeAg_B0048"/>
<dbReference type="HOGENOM" id="CLU_160655_4_0_6"/>
<dbReference type="Proteomes" id="UP000008819">
    <property type="component" value="Chromosome"/>
</dbReference>
<dbReference type="GO" id="GO:0005829">
    <property type="term" value="C:cytosol"/>
    <property type="evidence" value="ECO:0007669"/>
    <property type="project" value="TreeGrafter"/>
</dbReference>
<dbReference type="GO" id="GO:0015935">
    <property type="term" value="C:small ribosomal subunit"/>
    <property type="evidence" value="ECO:0007669"/>
    <property type="project" value="TreeGrafter"/>
</dbReference>
<dbReference type="GO" id="GO:0070181">
    <property type="term" value="F:small ribosomal subunit rRNA binding"/>
    <property type="evidence" value="ECO:0007669"/>
    <property type="project" value="TreeGrafter"/>
</dbReference>
<dbReference type="GO" id="GO:0003735">
    <property type="term" value="F:structural constituent of ribosome"/>
    <property type="evidence" value="ECO:0007669"/>
    <property type="project" value="InterPro"/>
</dbReference>
<dbReference type="GO" id="GO:0006412">
    <property type="term" value="P:translation"/>
    <property type="evidence" value="ECO:0007669"/>
    <property type="project" value="UniProtKB-UniRule"/>
</dbReference>
<dbReference type="FunFam" id="1.20.58.110:FF:000001">
    <property type="entry name" value="30S ribosomal protein S20"/>
    <property type="match status" value="1"/>
</dbReference>
<dbReference type="Gene3D" id="1.20.58.110">
    <property type="entry name" value="Ribosomal protein S20"/>
    <property type="match status" value="1"/>
</dbReference>
<dbReference type="HAMAP" id="MF_00500">
    <property type="entry name" value="Ribosomal_bS20"/>
    <property type="match status" value="1"/>
</dbReference>
<dbReference type="InterPro" id="IPR002583">
    <property type="entry name" value="Ribosomal_bS20"/>
</dbReference>
<dbReference type="InterPro" id="IPR036510">
    <property type="entry name" value="Ribosomal_bS20_sf"/>
</dbReference>
<dbReference type="NCBIfam" id="TIGR00029">
    <property type="entry name" value="S20"/>
    <property type="match status" value="1"/>
</dbReference>
<dbReference type="PANTHER" id="PTHR33398">
    <property type="entry name" value="30S RIBOSOMAL PROTEIN S20"/>
    <property type="match status" value="1"/>
</dbReference>
<dbReference type="PANTHER" id="PTHR33398:SF1">
    <property type="entry name" value="SMALL RIBOSOMAL SUBUNIT PROTEIN BS20C"/>
    <property type="match status" value="1"/>
</dbReference>
<dbReference type="Pfam" id="PF01649">
    <property type="entry name" value="Ribosomal_S20p"/>
    <property type="match status" value="1"/>
</dbReference>
<dbReference type="SUPFAM" id="SSF46992">
    <property type="entry name" value="Ribosomal protein S20"/>
    <property type="match status" value="1"/>
</dbReference>
<proteinExistence type="inferred from homology"/>
<name>RS20_SALA4</name>
<sequence>MANIKSAKKRAVQSEKARKHNASRRSMMRTFIKKVYAAIEAGDKAAALKAFNEMQPIVDRQAAKGLIHKNKAARHKANLTAQINKLA</sequence>
<accession>B5F721</accession>
<comment type="function">
    <text evidence="1">Binds directly to 16S ribosomal RNA.</text>
</comment>
<comment type="similarity">
    <text evidence="1">Belongs to the bacterial ribosomal protein bS20 family.</text>
</comment>
<evidence type="ECO:0000255" key="1">
    <source>
        <dbReference type="HAMAP-Rule" id="MF_00500"/>
    </source>
</evidence>
<evidence type="ECO:0000256" key="2">
    <source>
        <dbReference type="SAM" id="MobiDB-lite"/>
    </source>
</evidence>
<evidence type="ECO:0000305" key="3"/>
<feature type="chain" id="PRO_1000126504" description="Small ribosomal subunit protein bS20">
    <location>
        <begin position="1"/>
        <end position="87"/>
    </location>
</feature>
<feature type="region of interest" description="Disordered" evidence="2">
    <location>
        <begin position="1"/>
        <end position="26"/>
    </location>
</feature>
<protein>
    <recommendedName>
        <fullName evidence="1">Small ribosomal subunit protein bS20</fullName>
    </recommendedName>
    <alternativeName>
        <fullName evidence="3">30S ribosomal protein S20</fullName>
    </alternativeName>
</protein>
<keyword id="KW-0687">Ribonucleoprotein</keyword>
<keyword id="KW-0689">Ribosomal protein</keyword>
<keyword id="KW-0694">RNA-binding</keyword>
<keyword id="KW-0699">rRNA-binding</keyword>